<organism>
    <name type="scientific">His1 virus (isolate Australia/Victoria)</name>
    <name type="common">His1V</name>
    <name type="synonym">Haloarcula hispanica virus 1</name>
    <dbReference type="NCBI Taxonomy" id="654912"/>
    <lineage>
        <taxon>Viruses</taxon>
        <taxon>Viruses incertae sedis</taxon>
        <taxon>Halspiviridae</taxon>
        <taxon>Salterprovirus</taxon>
        <taxon>Salterprovirus His1</taxon>
    </lineage>
</organism>
<keyword id="KW-1185">Reference proteome</keyword>
<proteinExistence type="predicted"/>
<feature type="chain" id="PRO_0000384898" description="Uncharacterized protein ORF30">
    <location>
        <begin position="1"/>
        <end position="126"/>
    </location>
</feature>
<accession>Q25BG5</accession>
<name>Y030_HIS1I</name>
<dbReference type="EMBL" id="AF191796">
    <property type="protein sequence ID" value="AAQ13753.1"/>
    <property type="molecule type" value="Genomic_DNA"/>
</dbReference>
<dbReference type="RefSeq" id="YP_529542.1">
    <property type="nucleotide sequence ID" value="NC_007914.1"/>
</dbReference>
<dbReference type="KEGG" id="vg:5142397"/>
<dbReference type="Proteomes" id="UP000007024">
    <property type="component" value="Segment"/>
</dbReference>
<organismHost>
    <name type="scientific">Haloarcula hispanica</name>
    <dbReference type="NCBI Taxonomy" id="51589"/>
</organismHost>
<gene>
    <name type="ORF">ORF30</name>
</gene>
<protein>
    <recommendedName>
        <fullName>Uncharacterized protein ORF30</fullName>
    </recommendedName>
</protein>
<reference key="1">
    <citation type="journal article" date="2006" name="Virology">
        <title>His1 and His2 are distantly related, spindle-shaped haloviruses belonging to the novel virus group, Salterprovirus.</title>
        <authorList>
            <person name="Bath C."/>
            <person name="Cukalac T."/>
            <person name="Porter K."/>
            <person name="Dyall-Smith M.L."/>
        </authorList>
    </citation>
    <scope>NUCLEOTIDE SEQUENCE [GENOMIC DNA]</scope>
</reference>
<sequence length="126" mass="13938">MSDWRDFEPGRTGVSVANMADGESVEVQVVGEPYREDTSVSDNALHLPVVFLEAPDSFQDMSDDSVVTAEESDGEPKEYNIINSSTAFFNALVDAFPEAEQITGQSVEITARQPGDEYSRFYEMEV</sequence>